<protein>
    <recommendedName>
        <fullName evidence="1">UPF0122 protein LCABL_18170</fullName>
    </recommendedName>
</protein>
<name>Y1817_LACCB</name>
<evidence type="ECO:0000255" key="1">
    <source>
        <dbReference type="HAMAP-Rule" id="MF_00245"/>
    </source>
</evidence>
<dbReference type="EMBL" id="FM177140">
    <property type="protein sequence ID" value="CAQ66897.1"/>
    <property type="molecule type" value="Genomic_DNA"/>
</dbReference>
<dbReference type="SMR" id="B3WEU6"/>
<dbReference type="KEGG" id="lcb:LCABL_18170"/>
<dbReference type="HOGENOM" id="CLU_129218_1_0_9"/>
<dbReference type="Gene3D" id="1.10.10.10">
    <property type="entry name" value="Winged helix-like DNA-binding domain superfamily/Winged helix DNA-binding domain"/>
    <property type="match status" value="1"/>
</dbReference>
<dbReference type="HAMAP" id="MF_00245">
    <property type="entry name" value="UPF0122"/>
    <property type="match status" value="1"/>
</dbReference>
<dbReference type="InterPro" id="IPR013324">
    <property type="entry name" value="RNA_pol_sigma_r3/r4-like"/>
</dbReference>
<dbReference type="InterPro" id="IPR007394">
    <property type="entry name" value="UPF0122"/>
</dbReference>
<dbReference type="InterPro" id="IPR054831">
    <property type="entry name" value="UPF0122_fam_protein"/>
</dbReference>
<dbReference type="InterPro" id="IPR036388">
    <property type="entry name" value="WH-like_DNA-bd_sf"/>
</dbReference>
<dbReference type="NCBIfam" id="NF001068">
    <property type="entry name" value="PRK00118.1-4"/>
    <property type="match status" value="1"/>
</dbReference>
<dbReference type="NCBIfam" id="NF001070">
    <property type="entry name" value="PRK00118.1-6"/>
    <property type="match status" value="1"/>
</dbReference>
<dbReference type="NCBIfam" id="NF045758">
    <property type="entry name" value="YlxM"/>
    <property type="match status" value="1"/>
</dbReference>
<dbReference type="PANTHER" id="PTHR40083">
    <property type="entry name" value="UPF0122 PROTEIN CBO2450/CLC_2298"/>
    <property type="match status" value="1"/>
</dbReference>
<dbReference type="PANTHER" id="PTHR40083:SF1">
    <property type="entry name" value="UPF0122 PROTEIN YLXM"/>
    <property type="match status" value="1"/>
</dbReference>
<dbReference type="Pfam" id="PF04297">
    <property type="entry name" value="UPF0122"/>
    <property type="match status" value="1"/>
</dbReference>
<dbReference type="SUPFAM" id="SSF88659">
    <property type="entry name" value="Sigma3 and sigma4 domains of RNA polymerase sigma factors"/>
    <property type="match status" value="1"/>
</dbReference>
<organism>
    <name type="scientific">Lacticaseibacillus casei (strain BL23)</name>
    <name type="common">Lactobacillus casei</name>
    <dbReference type="NCBI Taxonomy" id="543734"/>
    <lineage>
        <taxon>Bacteria</taxon>
        <taxon>Bacillati</taxon>
        <taxon>Bacillota</taxon>
        <taxon>Bacilli</taxon>
        <taxon>Lactobacillales</taxon>
        <taxon>Lactobacillaceae</taxon>
        <taxon>Lacticaseibacillus</taxon>
    </lineage>
</organism>
<feature type="chain" id="PRO_1000100813" description="UPF0122 protein LCABL_18170">
    <location>
        <begin position="1"/>
        <end position="113"/>
    </location>
</feature>
<gene>
    <name type="ordered locus">LCABL_18170</name>
</gene>
<accession>B3WEU6</accession>
<proteinExistence type="inferred from homology"/>
<comment type="function">
    <text evidence="1">Might take part in the signal recognition particle (SRP) pathway. This is inferred from the conservation of its genetic proximity to ftsY/ffh. May be a regulatory protein.</text>
</comment>
<comment type="similarity">
    <text evidence="1">Belongs to the UPF0122 family.</text>
</comment>
<sequence length="113" mass="13203">MEIEKNYRMNSLFEFYGPLLTDKQHAYLALYYGDDYSLGEIATEFNVSRQAVYDNIRRTEASLEEYEKKLHLFANYQAQNEAVDTLVSYARTHYPDDKALSTLLERVADQTAK</sequence>
<reference key="1">
    <citation type="submission" date="2008-06" db="EMBL/GenBank/DDBJ databases">
        <title>Lactobacillus casei BL23 complete genome sequence.</title>
        <authorList>
            <person name="Maze A."/>
            <person name="Boel G."/>
            <person name="Bourand A."/>
            <person name="Loux V."/>
            <person name="Gibrat J.F."/>
            <person name="Zuniga M."/>
            <person name="Hartke A."/>
            <person name="Deutscher J."/>
        </authorList>
    </citation>
    <scope>NUCLEOTIDE SEQUENCE [LARGE SCALE GENOMIC DNA]</scope>
    <source>
        <strain>BL23</strain>
    </source>
</reference>